<sequence>MIEVLCNDRLGKKVRVKCMPDDTVGDFKKLVAAQTGTDPRRIVLKKWHSVFKDNITLADYEIHDGMSLEMYYS</sequence>
<keyword id="KW-0963">Cytoplasm</keyword>
<keyword id="KW-0507">mRNA processing</keyword>
<keyword id="KW-0508">mRNA splicing</keyword>
<keyword id="KW-0539">Nucleus</keyword>
<keyword id="KW-1185">Reference proteome</keyword>
<keyword id="KW-0833">Ubl conjugation pathway</keyword>
<proteinExistence type="evidence at protein level"/>
<dbReference type="EMBL" id="CU329671">
    <property type="protein sequence ID" value="CAB39137.1"/>
    <property type="molecule type" value="Genomic_DNA"/>
</dbReference>
<dbReference type="PIR" id="T40200">
    <property type="entry name" value="T40200"/>
</dbReference>
<dbReference type="RefSeq" id="NP_595099.1">
    <property type="nucleotide sequence ID" value="NM_001021006.2"/>
</dbReference>
<dbReference type="SMR" id="O94650"/>
<dbReference type="BioGRID" id="276917">
    <property type="interactions" value="19"/>
</dbReference>
<dbReference type="FunCoup" id="O94650">
    <property type="interactions" value="370"/>
</dbReference>
<dbReference type="IntAct" id="O94650">
    <property type="interactions" value="1"/>
</dbReference>
<dbReference type="STRING" id="284812.O94650"/>
<dbReference type="iPTMnet" id="O94650"/>
<dbReference type="PaxDb" id="4896-SPBC31E1.03.1"/>
<dbReference type="EnsemblFungi" id="SPBC31E1.03.1">
    <property type="protein sequence ID" value="SPBC31E1.03.1:pep"/>
    <property type="gene ID" value="SPBC31E1.03"/>
</dbReference>
<dbReference type="GeneID" id="2540389"/>
<dbReference type="KEGG" id="spo:2540389"/>
<dbReference type="PomBase" id="SPBC31E1.03">
    <property type="gene designation" value="hub1"/>
</dbReference>
<dbReference type="VEuPathDB" id="FungiDB:SPBC31E1.03"/>
<dbReference type="eggNOG" id="KOG3493">
    <property type="taxonomic scope" value="Eukaryota"/>
</dbReference>
<dbReference type="HOGENOM" id="CLU_156193_2_0_1"/>
<dbReference type="InParanoid" id="O94650"/>
<dbReference type="OMA" id="GMSLEMQ"/>
<dbReference type="PhylomeDB" id="O94650"/>
<dbReference type="PRO" id="PR:O94650"/>
<dbReference type="Proteomes" id="UP000002485">
    <property type="component" value="Chromosome II"/>
</dbReference>
<dbReference type="GO" id="GO:0005737">
    <property type="term" value="C:cytoplasm"/>
    <property type="evidence" value="ECO:0000314"/>
    <property type="project" value="PomBase"/>
</dbReference>
<dbReference type="GO" id="GO:0005829">
    <property type="term" value="C:cytosol"/>
    <property type="evidence" value="ECO:0007005"/>
    <property type="project" value="PomBase"/>
</dbReference>
<dbReference type="GO" id="GO:0005634">
    <property type="term" value="C:nucleus"/>
    <property type="evidence" value="ECO:0000314"/>
    <property type="project" value="PomBase"/>
</dbReference>
<dbReference type="GO" id="GO:0031386">
    <property type="term" value="F:protein tag activity"/>
    <property type="evidence" value="ECO:0000318"/>
    <property type="project" value="GO_Central"/>
</dbReference>
<dbReference type="GO" id="GO:0045292">
    <property type="term" value="P:mRNA cis splicing, via spliceosome"/>
    <property type="evidence" value="ECO:0000316"/>
    <property type="project" value="PomBase"/>
</dbReference>
<dbReference type="GO" id="GO:0000398">
    <property type="term" value="P:mRNA splicing, via spliceosome"/>
    <property type="evidence" value="ECO:0000318"/>
    <property type="project" value="GO_Central"/>
</dbReference>
<dbReference type="GO" id="GO:0036211">
    <property type="term" value="P:protein modification process"/>
    <property type="evidence" value="ECO:0000318"/>
    <property type="project" value="GO_Central"/>
</dbReference>
<dbReference type="CDD" id="cd01791">
    <property type="entry name" value="Ubl_UBL5"/>
    <property type="match status" value="1"/>
</dbReference>
<dbReference type="FunFam" id="3.10.20.90:FF:000052">
    <property type="entry name" value="Ubiquitin-like protein 5"/>
    <property type="match status" value="1"/>
</dbReference>
<dbReference type="Gene3D" id="3.10.20.90">
    <property type="entry name" value="Phosphatidylinositol 3-kinase Catalytic Subunit, Chain A, domain 1"/>
    <property type="match status" value="1"/>
</dbReference>
<dbReference type="InterPro" id="IPR039732">
    <property type="entry name" value="Hub1/Ubl5"/>
</dbReference>
<dbReference type="InterPro" id="IPR000626">
    <property type="entry name" value="Ubiquitin-like_dom"/>
</dbReference>
<dbReference type="InterPro" id="IPR029071">
    <property type="entry name" value="Ubiquitin-like_domsf"/>
</dbReference>
<dbReference type="PANTHER" id="PTHR13042">
    <property type="entry name" value="UBIQUITIN-LIKE PROTEIN 5"/>
    <property type="match status" value="1"/>
</dbReference>
<dbReference type="Pfam" id="PF00240">
    <property type="entry name" value="ubiquitin"/>
    <property type="match status" value="1"/>
</dbReference>
<dbReference type="SUPFAM" id="SSF54236">
    <property type="entry name" value="Ubiquitin-like"/>
    <property type="match status" value="1"/>
</dbReference>
<dbReference type="PROSITE" id="PS50053">
    <property type="entry name" value="UBIQUITIN_2"/>
    <property type="match status" value="1"/>
</dbReference>
<comment type="function">
    <text evidence="2 3">Forms a conjugate with snu66 and facilitates its localization to the nucleus. Involved in morphogenesis. Required for efficient splicing of pre-mRNA.</text>
</comment>
<comment type="subunit">
    <text evidence="3">Interacts with snu66.</text>
</comment>
<comment type="interaction">
    <interactant intactId="EBI-607734">
        <id>O94650</id>
    </interactant>
    <interactant intactId="EBI-607744">
        <id>O94538</id>
        <label>snu66</label>
    </interactant>
    <organismsDiffer>false</organismsDiffer>
    <experiments>2</experiments>
</comment>
<comment type="subcellular location">
    <subcellularLocation>
        <location>Nucleus</location>
    </subcellularLocation>
    <subcellularLocation>
        <location>Cytoplasm</location>
    </subcellularLocation>
</comment>
<protein>
    <recommendedName>
        <fullName>Ubiquitin-like modifier hub1</fullName>
    </recommendedName>
</protein>
<feature type="chain" id="PRO_0000114878" description="Ubiquitin-like modifier hub1">
    <location>
        <begin position="1"/>
        <end position="73"/>
    </location>
</feature>
<feature type="domain" description="Ubiquitin-like" evidence="1">
    <location>
        <begin position="1"/>
        <end position="73"/>
    </location>
</feature>
<feature type="mutagenesis site" description="In hub1-4; induces arrest of cell division in G2; cells binucleate and septated.">
    <original>M</original>
    <variation>K</variation>
    <location>
        <position position="70"/>
    </location>
</feature>
<name>HUB1_SCHPO</name>
<organism>
    <name type="scientific">Schizosaccharomyces pombe (strain 972 / ATCC 24843)</name>
    <name type="common">Fission yeast</name>
    <dbReference type="NCBI Taxonomy" id="284812"/>
    <lineage>
        <taxon>Eukaryota</taxon>
        <taxon>Fungi</taxon>
        <taxon>Dikarya</taxon>
        <taxon>Ascomycota</taxon>
        <taxon>Taphrinomycotina</taxon>
        <taxon>Schizosaccharomycetes</taxon>
        <taxon>Schizosaccharomycetales</taxon>
        <taxon>Schizosaccharomycetaceae</taxon>
        <taxon>Schizosaccharomyces</taxon>
    </lineage>
</organism>
<reference key="1">
    <citation type="journal article" date="2002" name="Nature">
        <title>The genome sequence of Schizosaccharomyces pombe.</title>
        <authorList>
            <person name="Wood V."/>
            <person name="Gwilliam R."/>
            <person name="Rajandream M.A."/>
            <person name="Lyne M.H."/>
            <person name="Lyne R."/>
            <person name="Stewart A."/>
            <person name="Sgouros J.G."/>
            <person name="Peat N."/>
            <person name="Hayles J."/>
            <person name="Baker S.G."/>
            <person name="Basham D."/>
            <person name="Bowman S."/>
            <person name="Brooks K."/>
            <person name="Brown D."/>
            <person name="Brown S."/>
            <person name="Chillingworth T."/>
            <person name="Churcher C.M."/>
            <person name="Collins M."/>
            <person name="Connor R."/>
            <person name="Cronin A."/>
            <person name="Davis P."/>
            <person name="Feltwell T."/>
            <person name="Fraser A."/>
            <person name="Gentles S."/>
            <person name="Goble A."/>
            <person name="Hamlin N."/>
            <person name="Harris D.E."/>
            <person name="Hidalgo J."/>
            <person name="Hodgson G."/>
            <person name="Holroyd S."/>
            <person name="Hornsby T."/>
            <person name="Howarth S."/>
            <person name="Huckle E.J."/>
            <person name="Hunt S."/>
            <person name="Jagels K."/>
            <person name="James K.D."/>
            <person name="Jones L."/>
            <person name="Jones M."/>
            <person name="Leather S."/>
            <person name="McDonald S."/>
            <person name="McLean J."/>
            <person name="Mooney P."/>
            <person name="Moule S."/>
            <person name="Mungall K.L."/>
            <person name="Murphy L.D."/>
            <person name="Niblett D."/>
            <person name="Odell C."/>
            <person name="Oliver K."/>
            <person name="O'Neil S."/>
            <person name="Pearson D."/>
            <person name="Quail M.A."/>
            <person name="Rabbinowitsch E."/>
            <person name="Rutherford K.M."/>
            <person name="Rutter S."/>
            <person name="Saunders D."/>
            <person name="Seeger K."/>
            <person name="Sharp S."/>
            <person name="Skelton J."/>
            <person name="Simmonds M.N."/>
            <person name="Squares R."/>
            <person name="Squares S."/>
            <person name="Stevens K."/>
            <person name="Taylor K."/>
            <person name="Taylor R.G."/>
            <person name="Tivey A."/>
            <person name="Walsh S.V."/>
            <person name="Warren T."/>
            <person name="Whitehead S."/>
            <person name="Woodward J.R."/>
            <person name="Volckaert G."/>
            <person name="Aert R."/>
            <person name="Robben J."/>
            <person name="Grymonprez B."/>
            <person name="Weltjens I."/>
            <person name="Vanstreels E."/>
            <person name="Rieger M."/>
            <person name="Schaefer M."/>
            <person name="Mueller-Auer S."/>
            <person name="Gabel C."/>
            <person name="Fuchs M."/>
            <person name="Duesterhoeft A."/>
            <person name="Fritzc C."/>
            <person name="Holzer E."/>
            <person name="Moestl D."/>
            <person name="Hilbert H."/>
            <person name="Borzym K."/>
            <person name="Langer I."/>
            <person name="Beck A."/>
            <person name="Lehrach H."/>
            <person name="Reinhardt R."/>
            <person name="Pohl T.M."/>
            <person name="Eger P."/>
            <person name="Zimmermann W."/>
            <person name="Wedler H."/>
            <person name="Wambutt R."/>
            <person name="Purnelle B."/>
            <person name="Goffeau A."/>
            <person name="Cadieu E."/>
            <person name="Dreano S."/>
            <person name="Gloux S."/>
            <person name="Lelaure V."/>
            <person name="Mottier S."/>
            <person name="Galibert F."/>
            <person name="Aves S.J."/>
            <person name="Xiang Z."/>
            <person name="Hunt C."/>
            <person name="Moore K."/>
            <person name="Hurst S.M."/>
            <person name="Lucas M."/>
            <person name="Rochet M."/>
            <person name="Gaillardin C."/>
            <person name="Tallada V.A."/>
            <person name="Garzon A."/>
            <person name="Thode G."/>
            <person name="Daga R.R."/>
            <person name="Cruzado L."/>
            <person name="Jimenez J."/>
            <person name="Sanchez M."/>
            <person name="del Rey F."/>
            <person name="Benito J."/>
            <person name="Dominguez A."/>
            <person name="Revuelta J.L."/>
            <person name="Moreno S."/>
            <person name="Armstrong J."/>
            <person name="Forsburg S.L."/>
            <person name="Cerutti L."/>
            <person name="Lowe T."/>
            <person name="McCombie W.R."/>
            <person name="Paulsen I."/>
            <person name="Potashkin J."/>
            <person name="Shpakovski G.V."/>
            <person name="Ussery D."/>
            <person name="Barrell B.G."/>
            <person name="Nurse P."/>
        </authorList>
    </citation>
    <scope>NUCLEOTIDE SEQUENCE [LARGE SCALE GENOMIC DNA]</scope>
    <source>
        <strain>972 / ATCC 24843</strain>
    </source>
</reference>
<reference key="2">
    <citation type="journal article" date="2004" name="Genes Cells">
        <title>Hub1 is an essential ubiquitin-like protein without functioning as a typical modifier in fission yeast.</title>
        <authorList>
            <person name="Yashiroda H."/>
            <person name="Tanaka K."/>
        </authorList>
    </citation>
    <scope>FUNCTION</scope>
    <scope>SUBCELLULAR LOCATION</scope>
</reference>
<reference key="3">
    <citation type="journal article" date="2004" name="Curr. Biol.">
        <title>Ubiquitin-like protein Hub1 is required for pre-mRNA splicing and localization of an essential splicing factor in fission yeast.</title>
        <authorList>
            <person name="Wilkinson C.R.M."/>
            <person name="Dittmar G.A.G."/>
            <person name="Ohi M.D."/>
            <person name="Uetz P."/>
            <person name="Jones N."/>
            <person name="Finley D."/>
        </authorList>
    </citation>
    <scope>FUNCTION</scope>
    <scope>INTERACTION WITH SNU66</scope>
    <scope>MUTANT HUB1-4</scope>
</reference>
<reference key="4">
    <citation type="journal article" date="2006" name="Nat. Biotechnol.">
        <title>ORFeome cloning and global analysis of protein localization in the fission yeast Schizosaccharomyces pombe.</title>
        <authorList>
            <person name="Matsuyama A."/>
            <person name="Arai R."/>
            <person name="Yashiroda Y."/>
            <person name="Shirai A."/>
            <person name="Kamata A."/>
            <person name="Sekido S."/>
            <person name="Kobayashi Y."/>
            <person name="Hashimoto A."/>
            <person name="Hamamoto M."/>
            <person name="Hiraoka Y."/>
            <person name="Horinouchi S."/>
            <person name="Yoshida M."/>
        </authorList>
    </citation>
    <scope>SUBCELLULAR LOCATION [LARGE SCALE ANALYSIS]</scope>
</reference>
<gene>
    <name type="primary">hub1</name>
    <name type="synonym">ubl4</name>
    <name type="ORF">SPBC31E1.03</name>
</gene>
<evidence type="ECO:0000255" key="1">
    <source>
        <dbReference type="PROSITE-ProRule" id="PRU00214"/>
    </source>
</evidence>
<evidence type="ECO:0000269" key="2">
    <source>
    </source>
</evidence>
<evidence type="ECO:0000269" key="3">
    <source>
    </source>
</evidence>
<accession>O94650</accession>